<accession>C8ZFN1</accession>
<reference key="1">
    <citation type="journal article" date="2009" name="Proc. Natl. Acad. Sci. U.S.A.">
        <title>Eukaryote-to-eukaryote gene transfer events revealed by the genome sequence of the wine yeast Saccharomyces cerevisiae EC1118.</title>
        <authorList>
            <person name="Novo M."/>
            <person name="Bigey F."/>
            <person name="Beyne E."/>
            <person name="Galeote V."/>
            <person name="Gavory F."/>
            <person name="Mallet S."/>
            <person name="Cambon B."/>
            <person name="Legras J.-L."/>
            <person name="Wincker P."/>
            <person name="Casaregola S."/>
            <person name="Dequin S."/>
        </authorList>
    </citation>
    <scope>NUCLEOTIDE SEQUENCE [LARGE SCALE GENOMIC DNA]</scope>
    <source>
        <strain>Lalvin EC1118 / Prise de mousse</strain>
    </source>
</reference>
<name>SWM2_YEAS8</name>
<feature type="chain" id="PRO_0000405679" description="Nucleolar protein SWM2">
    <location>
        <begin position="1"/>
        <end position="146"/>
    </location>
</feature>
<gene>
    <name type="primary">SWM2</name>
    <name type="ORF">EC1118_1N18_0441g</name>
</gene>
<keyword id="KW-0539">Nucleus</keyword>
<proteinExistence type="inferred from homology"/>
<protein>
    <recommendedName>
        <fullName>Nucleolar protein SWM2</fullName>
    </recommendedName>
    <alternativeName>
        <fullName>Synthetic With MUD2-delta protein 2</fullName>
    </alternativeName>
</protein>
<dbReference type="EMBL" id="FN393083">
    <property type="protein sequence ID" value="CAY82197.1"/>
    <property type="molecule type" value="Genomic_DNA"/>
</dbReference>
<dbReference type="HOGENOM" id="CLU_147530_0_0_1"/>
<dbReference type="OrthoDB" id="5173at4893"/>
<dbReference type="Proteomes" id="UP000000286">
    <property type="component" value="Chromosome XIV, Scaffold EC1118_1N18"/>
</dbReference>
<dbReference type="GO" id="GO:0005730">
    <property type="term" value="C:nucleolus"/>
    <property type="evidence" value="ECO:0007669"/>
    <property type="project" value="UniProtKB-SubCell"/>
</dbReference>
<dbReference type="InterPro" id="IPR031391">
    <property type="entry name" value="Swm2"/>
</dbReference>
<dbReference type="Pfam" id="PF17083">
    <property type="entry name" value="Swm2"/>
    <property type="match status" value="1"/>
</dbReference>
<evidence type="ECO:0000250" key="1"/>
<evidence type="ECO:0000305" key="2"/>
<comment type="subcellular location">
    <subcellularLocation>
        <location evidence="1">Nucleus</location>
        <location evidence="1">Nucleolus</location>
    </subcellularLocation>
</comment>
<comment type="similarity">
    <text evidence="2">Belongs to the SWM2 family.</text>
</comment>
<organism>
    <name type="scientific">Saccharomyces cerevisiae (strain Lalvin EC1118 / Prise de mousse)</name>
    <name type="common">Baker's yeast</name>
    <dbReference type="NCBI Taxonomy" id="643680"/>
    <lineage>
        <taxon>Eukaryota</taxon>
        <taxon>Fungi</taxon>
        <taxon>Dikarya</taxon>
        <taxon>Ascomycota</taxon>
        <taxon>Saccharomycotina</taxon>
        <taxon>Saccharomycetes</taxon>
        <taxon>Saccharomycetales</taxon>
        <taxon>Saccharomycetaceae</taxon>
        <taxon>Saccharomyces</taxon>
    </lineage>
</organism>
<sequence>MIDLYNYSNLEGLLDGLTDLNRIPKEYSAVLEPYFQNIARNAHLKSRALKICRSNFHKWNEEGAKTVNPEIIRRCLNLWYVLKGKEYKKLKDPPPADNIIKDEIDVSYVKNLNVVRLEFDEFGKLISNPLENLILEEVEVNDFIQE</sequence>